<organism>
    <name type="scientific">Methanosarcina thermophila</name>
    <dbReference type="NCBI Taxonomy" id="2210"/>
    <lineage>
        <taxon>Archaea</taxon>
        <taxon>Methanobacteriati</taxon>
        <taxon>Methanobacteriota</taxon>
        <taxon>Stenosarchaea group</taxon>
        <taxon>Methanomicrobia</taxon>
        <taxon>Methanosarcinales</taxon>
        <taxon>Methanosarcinaceae</taxon>
        <taxon>Methanosarcina</taxon>
    </lineage>
</organism>
<reference key="1">
    <citation type="journal article" date="1993" name="J. Bacteriol.">
        <title>Cloning, sequence analysis, and hyperexpression of the genes encoding phosphotransacetylase and acetate kinase from Methanosarcina thermophila.</title>
        <authorList>
            <person name="Latimer M.T."/>
            <person name="Ferry J.G."/>
        </authorList>
    </citation>
    <scope>NUCLEOTIDE SEQUENCE [GENOMIC DNA]</scope>
    <scope>CATALYTIC ACTIVITY</scope>
    <scope>ACTIVITY REGULATION</scope>
    <scope>BIOPHYSICOCHEMICAL PROPERTIES</scope>
    <source>
        <strain>ATCC 43570 / DSM 1825 / OCM 12 / TM-1</strain>
    </source>
</reference>
<reference key="2">
    <citation type="journal article" date="1988" name="J. Biol. Chem.">
        <title>Purification and characterization of acetate kinase from acetate-grown Methanosarcina thermophila. Evidence for regulation of synthesis.</title>
        <authorList>
            <person name="Aceti D.J."/>
            <person name="Ferry J.G."/>
        </authorList>
    </citation>
    <scope>PROTEIN SEQUENCE OF 1-17</scope>
    <scope>CATALYTIC ACTIVITY</scope>
    <scope>SUBUNIT</scope>
    <scope>BIOPHYSICOCHEMICAL PROPERTIES</scope>
</reference>
<reference key="3">
    <citation type="journal article" date="2001" name="J. Biol. Chem.">
        <title>Site-directed mutational analysis of active site residues in the acetate kinase from Methanosarcina thermophila.</title>
        <authorList>
            <person name="Miles R.D."/>
            <person name="Iyer P.P."/>
            <person name="Ferry J.G."/>
        </authorList>
    </citation>
    <scope>CATALYTIC ACTIVITY</scope>
    <scope>SUBUNIT</scope>
    <scope>COFACTOR</scope>
    <scope>MUTAGENESIS OF ASN-7; SER-10; SER-12; LYS-14; ASP-148; ASN-211 AND GLU-384</scope>
</reference>
<reference key="4">
    <citation type="journal article" date="2005" name="J. Bacteriol.">
        <title>Characterization of the acetate binding pocket in the Methanosarcina thermophila acetate kinase.</title>
        <authorList>
            <person name="Ingram-Smith C."/>
            <person name="Gorrell A."/>
            <person name="Lawrence S.H."/>
            <person name="Iyer P."/>
            <person name="Smith K."/>
            <person name="Ferry J.G."/>
        </authorList>
    </citation>
    <scope>CATALYTIC ACTIVITY</scope>
    <scope>FUNCTION</scope>
    <scope>BIOPHYSICOCHEMICAL PROPERTIES</scope>
    <scope>MUTAGENESIS OF VAL-93; LEU-122; PHE-179 AND PRO-232</scope>
</reference>
<reference key="5">
    <citation type="journal article" date="2007" name="Biochemistry">
        <title>Investigation of the Methanosarcina thermophila acetate kinase mechanism by fluorescence quenching.</title>
        <authorList>
            <person name="Gorrell A."/>
            <person name="Ferry J.G."/>
        </authorList>
    </citation>
    <scope>CATALYTIC ACTIVITY</scope>
    <scope>SUBUNIT</scope>
    <scope>BIOPHYSICOCHEMICAL PROPERTIES</scope>
    <scope>MUTAGENESIS OF ARG-91 AND ARG-241</scope>
</reference>
<reference key="6">
    <citation type="journal article" date="2001" name="J. Bacteriol.">
        <title>Urkinase: structure of acetate kinase, a member of the ASKHA superfamily of phosphotransferases.</title>
        <authorList>
            <person name="Buss K.A."/>
            <person name="Cooper D.R."/>
            <person name="Ingram-Smith C."/>
            <person name="Ferry J.G."/>
            <person name="Sanders D.A."/>
            <person name="Hasson M.S."/>
        </authorList>
    </citation>
    <scope>X-RAY CRYSTALLOGRAPHY (2.50 ANGSTROMS) IN COMPLEX WITH THE ATP ANALOG ADP</scope>
    <scope>ACTIVE SITE</scope>
    <scope>SUBUNIT</scope>
</reference>
<reference key="7">
    <citation type="journal article" date="2005" name="J. Biol. Chem.">
        <title>Structural and kinetic analyses of arginine residues in the active site of the acetate kinase from Methanosarcina thermophila.</title>
        <authorList>
            <person name="Gorrell A."/>
            <person name="Lawrence S.H."/>
            <person name="Ferry J.G."/>
        </authorList>
    </citation>
    <scope>X-RAY CRYSTALLOGRAPHY (2.50 ANGSTROMS) OF 1-399 IN COMPLEX WITH THE ATP ANALOGS ADP; AMP; ALF3 AND THE SUBSTRATE ACETATE</scope>
    <scope>CATALYTIC ACTIVITY</scope>
    <scope>BIOPHYSICOCHEMICAL PROPERTIES</scope>
    <scope>ACTIVE SITE</scope>
    <scope>ACTIVITY REGULATION</scope>
    <scope>COFACTOR</scope>
    <scope>SUBUNIT</scope>
    <scope>MUTAGENESIS OF ARG-91 AND ARG-241</scope>
</reference>
<protein>
    <recommendedName>
        <fullName evidence="1">Acetate kinase</fullName>
        <ecNumber evidence="1">2.7.2.1</ecNumber>
    </recommendedName>
    <alternativeName>
        <fullName evidence="1">Acetokinase</fullName>
    </alternativeName>
</protein>
<feature type="chain" id="PRO_0000107650" description="Acetate kinase">
    <location>
        <begin position="1"/>
        <end position="408"/>
    </location>
</feature>
<feature type="active site" description="Proton donor/acceptor" evidence="1 2 4">
    <location>
        <position position="148"/>
    </location>
</feature>
<feature type="binding site" evidence="9">
    <location>
        <position position="7"/>
    </location>
    <ligand>
        <name>Mg(2+)</name>
        <dbReference type="ChEBI" id="CHEBI:18420"/>
    </ligand>
</feature>
<feature type="binding site">
    <location>
        <position position="14"/>
    </location>
    <ligand>
        <name>ATP</name>
        <dbReference type="ChEBI" id="CHEBI:30616"/>
    </ligand>
</feature>
<feature type="binding site">
    <location>
        <position position="91"/>
    </location>
    <ligand>
        <name>substrate</name>
    </ligand>
</feature>
<feature type="binding site">
    <location>
        <begin position="208"/>
        <end position="212"/>
    </location>
    <ligand>
        <name>ATP</name>
        <dbReference type="ChEBI" id="CHEBI:30616"/>
    </ligand>
</feature>
<feature type="binding site">
    <location>
        <begin position="283"/>
        <end position="285"/>
    </location>
    <ligand>
        <name>ATP</name>
        <dbReference type="ChEBI" id="CHEBI:30616"/>
    </ligand>
</feature>
<feature type="binding site">
    <location>
        <begin position="331"/>
        <end position="335"/>
    </location>
    <ligand>
        <name>ATP</name>
        <dbReference type="ChEBI" id="CHEBI:30616"/>
    </ligand>
</feature>
<feature type="binding site" evidence="9">
    <location>
        <position position="384"/>
    </location>
    <ligand>
        <name>Mg(2+)</name>
        <dbReference type="ChEBI" id="CHEBI:18420"/>
    </ligand>
</feature>
<feature type="site" description="Transition state stabilizer">
    <location>
        <position position="180"/>
    </location>
</feature>
<feature type="site" description="Transition state stabilizer">
    <location>
        <position position="241"/>
    </location>
</feature>
<feature type="mutagenesis site" description="Almost abolishes catalytic activity. Requires increased magnesium levels for activity. Strongly decreases affinity for acetate." evidence="3">
    <original>N</original>
    <variation>A</variation>
    <location>
        <position position="7"/>
    </location>
</feature>
<feature type="mutagenesis site" description="Almost abolishes catalytic activity. Strongly decreases affinity for acetate." evidence="3">
    <original>N</original>
    <variation>D</variation>
    <location>
        <position position="7"/>
    </location>
</feature>
<feature type="mutagenesis site" description="Strongly decreases catalytic activity. Strongly decreases affinity for acetate." evidence="3">
    <original>S</original>
    <variation>A</variation>
    <variation>T</variation>
    <location>
        <position position="10"/>
    </location>
</feature>
<feature type="mutagenesis site" description="Decreases catalytic activity. Decreases affinity for acetate.">
    <original>S</original>
    <variation>A</variation>
    <location>
        <position position="11"/>
    </location>
</feature>
<feature type="mutagenesis site" description="Strongly decreases catalytic activity. Strongly decreases affinity for acetate.">
    <original>S</original>
    <variation>T</variation>
    <location>
        <position position="11"/>
    </location>
</feature>
<feature type="mutagenesis site" description="Decreases catalytic activity. Strongly decreases affinity for acetate. Requires increased magnesium levels for enzyme activity." evidence="3">
    <original>S</original>
    <variation>A</variation>
    <location>
        <position position="12"/>
    </location>
</feature>
<feature type="mutagenesis site" description="Decreases catalytic activity. Strongly decreases affinity for acetate." evidence="3">
    <original>S</original>
    <variation>T</variation>
    <location>
        <position position="12"/>
    </location>
</feature>
<feature type="mutagenesis site" description="Strongly decreases enzyme activity." evidence="3">
    <original>K</original>
    <variation>A</variation>
    <location>
        <position position="14"/>
    </location>
</feature>
<feature type="mutagenesis site" description="Reduces enzyme activity." evidence="3">
    <original>K</original>
    <variation>R</variation>
    <location>
        <position position="14"/>
    </location>
</feature>
<feature type="mutagenesis site" description="Decreases catalytic activity. Decreases affinity for acetate." evidence="4 6">
    <original>R</original>
    <variation>A</variation>
    <variation>L</variation>
    <location>
        <position position="91"/>
    </location>
</feature>
<feature type="mutagenesis site" description="Decreases affinity for acetate." evidence="5">
    <original>V</original>
    <variation>A</variation>
    <location>
        <position position="93"/>
    </location>
</feature>
<feature type="mutagenesis site" description="Decreases affinity for acetate." evidence="5">
    <original>L</original>
    <variation>A</variation>
    <location>
        <position position="122"/>
    </location>
</feature>
<feature type="mutagenesis site" description="Abolishes catalytic activity. Decreases affinity for acetate, but not for ATP." evidence="3">
    <original>D</original>
    <variation>A</variation>
    <variation>E</variation>
    <variation>N</variation>
    <location>
        <position position="148"/>
    </location>
</feature>
<feature type="mutagenesis site" description="Decreases affinity for acetate." evidence="5">
    <original>F</original>
    <variation>A</variation>
    <location>
        <position position="179"/>
    </location>
</feature>
<feature type="mutagenesis site" description="Slightly reduced enzyme activity." evidence="3">
    <original>N</original>
    <variation>A</variation>
    <location>
        <position position="211"/>
    </location>
</feature>
<feature type="mutagenesis site" description="Decreases affinity for acetate." evidence="5">
    <original>P</original>
    <variation>A</variation>
    <location>
        <position position="232"/>
    </location>
</feature>
<feature type="mutagenesis site" description="Decreases catalytic activity. Strongly reduced affinity for ATP." evidence="4 6">
    <original>R</original>
    <variation>K</variation>
    <variation>L</variation>
    <location>
        <position position="241"/>
    </location>
</feature>
<feature type="mutagenesis site" description="Almost abolishes catalytic activity. Strongly decreases affinity for acetate. Requires strongly increased magnesium levels for enzyme activity." evidence="3">
    <original>E</original>
    <variation>A</variation>
    <location>
        <position position="384"/>
    </location>
</feature>
<feature type="strand" evidence="10">
    <location>
        <begin position="2"/>
        <end position="8"/>
    </location>
</feature>
<feature type="strand" evidence="10">
    <location>
        <begin position="13"/>
        <end position="19"/>
    </location>
</feature>
<feature type="turn" evidence="10">
    <location>
        <begin position="20"/>
        <end position="23"/>
    </location>
</feature>
<feature type="strand" evidence="10">
    <location>
        <begin position="24"/>
        <end position="33"/>
    </location>
</feature>
<feature type="strand" evidence="10">
    <location>
        <begin position="36"/>
        <end position="38"/>
    </location>
</feature>
<feature type="strand" evidence="10">
    <location>
        <begin position="40"/>
        <end position="45"/>
    </location>
</feature>
<feature type="strand" evidence="10">
    <location>
        <begin position="50"/>
        <end position="54"/>
    </location>
</feature>
<feature type="helix" evidence="10">
    <location>
        <begin position="60"/>
        <end position="71"/>
    </location>
</feature>
<feature type="turn" evidence="10">
    <location>
        <begin position="74"/>
        <end position="76"/>
    </location>
</feature>
<feature type="helix" evidence="10">
    <location>
        <begin position="82"/>
        <end position="84"/>
    </location>
</feature>
<feature type="strand" evidence="10">
    <location>
        <begin position="87"/>
        <end position="93"/>
    </location>
</feature>
<feature type="turn" evidence="10">
    <location>
        <begin position="96"/>
        <end position="98"/>
    </location>
</feature>
<feature type="helix" evidence="10">
    <location>
        <begin position="107"/>
        <end position="115"/>
    </location>
</feature>
<feature type="helix" evidence="10">
    <location>
        <begin position="117"/>
        <end position="119"/>
    </location>
</feature>
<feature type="turn" evidence="10">
    <location>
        <begin position="121"/>
        <end position="123"/>
    </location>
</feature>
<feature type="helix" evidence="10">
    <location>
        <begin position="124"/>
        <end position="137"/>
    </location>
</feature>
<feature type="strand" evidence="10">
    <location>
        <begin position="143"/>
        <end position="147"/>
    </location>
</feature>
<feature type="helix" evidence="10">
    <location>
        <begin position="150"/>
        <end position="154"/>
    </location>
</feature>
<feature type="helix" evidence="10">
    <location>
        <begin position="157"/>
        <end position="160"/>
    </location>
</feature>
<feature type="helix" evidence="10">
    <location>
        <begin position="166"/>
        <end position="172"/>
    </location>
</feature>
<feature type="helix" evidence="10">
    <location>
        <begin position="181"/>
        <end position="195"/>
    </location>
</feature>
<feature type="helix" evidence="10">
    <location>
        <begin position="199"/>
        <end position="201"/>
    </location>
</feature>
<feature type="strand" evidence="10">
    <location>
        <begin position="203"/>
        <end position="219"/>
    </location>
</feature>
<feature type="strand" evidence="10">
    <location>
        <begin position="222"/>
        <end position="227"/>
    </location>
</feature>
<feature type="strand" evidence="10">
    <location>
        <begin position="234"/>
        <end position="236"/>
    </location>
</feature>
<feature type="helix" evidence="10">
    <location>
        <begin position="249"/>
        <end position="257"/>
    </location>
</feature>
<feature type="helix" evidence="10">
    <location>
        <begin position="261"/>
        <end position="270"/>
    </location>
</feature>
<feature type="helix" evidence="10">
    <location>
        <begin position="273"/>
        <end position="278"/>
    </location>
</feature>
<feature type="helix" evidence="10">
    <location>
        <begin position="284"/>
        <end position="292"/>
    </location>
</feature>
<feature type="helix" evidence="10">
    <location>
        <begin position="296"/>
        <end position="319"/>
    </location>
</feature>
<feature type="strand" evidence="10">
    <location>
        <begin position="324"/>
        <end position="329"/>
    </location>
</feature>
<feature type="helix" evidence="10">
    <location>
        <begin position="330"/>
        <end position="335"/>
    </location>
</feature>
<feature type="helix" evidence="10">
    <location>
        <begin position="337"/>
        <end position="344"/>
    </location>
</feature>
<feature type="helix" evidence="10">
    <location>
        <begin position="348"/>
        <end position="350"/>
    </location>
</feature>
<feature type="helix" evidence="10">
    <location>
        <begin position="358"/>
        <end position="360"/>
    </location>
</feature>
<feature type="strand" evidence="10">
    <location>
        <begin position="374"/>
        <end position="379"/>
    </location>
</feature>
<feature type="helix" evidence="10">
    <location>
        <begin position="384"/>
        <end position="397"/>
    </location>
</feature>
<dbReference type="EC" id="2.7.2.1" evidence="1"/>
<dbReference type="EMBL" id="L23147">
    <property type="protein sequence ID" value="AAA72042.1"/>
    <property type="molecule type" value="Unassigned_DNA"/>
</dbReference>
<dbReference type="PIR" id="B49338">
    <property type="entry name" value="B49338"/>
</dbReference>
<dbReference type="PDB" id="1G99">
    <property type="method" value="X-ray"/>
    <property type="resolution" value="2.50 A"/>
    <property type="chains" value="A/B=1-408"/>
</dbReference>
<dbReference type="PDB" id="1TUU">
    <property type="method" value="X-ray"/>
    <property type="resolution" value="2.50 A"/>
    <property type="chains" value="A/B=1-399"/>
</dbReference>
<dbReference type="PDB" id="1TUY">
    <property type="method" value="X-ray"/>
    <property type="resolution" value="3.00 A"/>
    <property type="chains" value="A/B=1-399"/>
</dbReference>
<dbReference type="PDBsum" id="1G99"/>
<dbReference type="PDBsum" id="1TUU"/>
<dbReference type="PDBsum" id="1TUY"/>
<dbReference type="SMR" id="P38502"/>
<dbReference type="KEGG" id="ag:AAA72042"/>
<dbReference type="BRENDA" id="2.7.2.1">
    <property type="organism ID" value="3281"/>
</dbReference>
<dbReference type="SABIO-RK" id="P38502"/>
<dbReference type="UniPathway" id="UPA00340">
    <property type="reaction ID" value="UER00458"/>
</dbReference>
<dbReference type="EvolutionaryTrace" id="P38502"/>
<dbReference type="GO" id="GO:0005737">
    <property type="term" value="C:cytoplasm"/>
    <property type="evidence" value="ECO:0007669"/>
    <property type="project" value="UniProtKB-SubCell"/>
</dbReference>
<dbReference type="GO" id="GO:0008776">
    <property type="term" value="F:acetate kinase activity"/>
    <property type="evidence" value="ECO:0007669"/>
    <property type="project" value="UniProtKB-UniRule"/>
</dbReference>
<dbReference type="GO" id="GO:0005524">
    <property type="term" value="F:ATP binding"/>
    <property type="evidence" value="ECO:0007669"/>
    <property type="project" value="UniProtKB-KW"/>
</dbReference>
<dbReference type="GO" id="GO:0000287">
    <property type="term" value="F:magnesium ion binding"/>
    <property type="evidence" value="ECO:0007669"/>
    <property type="project" value="UniProtKB-UniRule"/>
</dbReference>
<dbReference type="GO" id="GO:0006083">
    <property type="term" value="P:acetate metabolic process"/>
    <property type="evidence" value="ECO:0007669"/>
    <property type="project" value="TreeGrafter"/>
</dbReference>
<dbReference type="GO" id="GO:0006085">
    <property type="term" value="P:acetyl-CoA biosynthetic process"/>
    <property type="evidence" value="ECO:0007669"/>
    <property type="project" value="UniProtKB-UniRule"/>
</dbReference>
<dbReference type="CDD" id="cd24010">
    <property type="entry name" value="ASKHA_NBD_AcK_PK"/>
    <property type="match status" value="1"/>
</dbReference>
<dbReference type="Gene3D" id="3.30.420.40">
    <property type="match status" value="2"/>
</dbReference>
<dbReference type="HAMAP" id="MF_00020">
    <property type="entry name" value="Acetate_kinase"/>
    <property type="match status" value="1"/>
</dbReference>
<dbReference type="InterPro" id="IPR004372">
    <property type="entry name" value="Ac/propionate_kinase"/>
</dbReference>
<dbReference type="InterPro" id="IPR000890">
    <property type="entry name" value="Aliphatic_acid_kin_short-chain"/>
</dbReference>
<dbReference type="InterPro" id="IPR023865">
    <property type="entry name" value="Aliphatic_acid_kinase_CS"/>
</dbReference>
<dbReference type="InterPro" id="IPR043129">
    <property type="entry name" value="ATPase_NBD"/>
</dbReference>
<dbReference type="NCBIfam" id="TIGR00016">
    <property type="entry name" value="ackA"/>
    <property type="match status" value="1"/>
</dbReference>
<dbReference type="PANTHER" id="PTHR21060">
    <property type="entry name" value="ACETATE KINASE"/>
    <property type="match status" value="1"/>
</dbReference>
<dbReference type="PANTHER" id="PTHR21060:SF15">
    <property type="entry name" value="ACETATE KINASE-RELATED"/>
    <property type="match status" value="1"/>
</dbReference>
<dbReference type="Pfam" id="PF00871">
    <property type="entry name" value="Acetate_kinase"/>
    <property type="match status" value="1"/>
</dbReference>
<dbReference type="PIRSF" id="PIRSF000722">
    <property type="entry name" value="Acetate_prop_kin"/>
    <property type="match status" value="1"/>
</dbReference>
<dbReference type="PRINTS" id="PR00471">
    <property type="entry name" value="ACETATEKNASE"/>
</dbReference>
<dbReference type="SUPFAM" id="SSF53067">
    <property type="entry name" value="Actin-like ATPase domain"/>
    <property type="match status" value="2"/>
</dbReference>
<dbReference type="PROSITE" id="PS01075">
    <property type="entry name" value="ACETATE_KINASE_1"/>
    <property type="match status" value="1"/>
</dbReference>
<dbReference type="PROSITE" id="PS01076">
    <property type="entry name" value="ACETATE_KINASE_2"/>
    <property type="match status" value="1"/>
</dbReference>
<sequence>MKVLVINAGSSSLKYQLIDMTNESALAVGLCERIGIDNSIITQKKFDGKKLEKLTDLPTHKDALEEVVKALTDDEFGVIKDMGEINAVGHRVVHGGEKFTTSALYDEGVEKAIKDCFELAPLHNPPNMMGISACAEIMPGTPMVIVFDTAFHQTMPPYAYMYALPYDLYEKHGVRKYGFHGTSHKYVAERAALMLGKPAEETKIITCHLGNGSSITAVEGGKSVETSMGFTPLEGLAMGTRCGSIDPAIVPFLMEKEGLTTREIDTLMNKKSGVLGVSGLSNDFRDLDEAASKGNRKAELALEIFAYKVKKFIGEYSAVLNGADAVVFTAGIGENSASIRKRILTGLDGIGIKIDDEKNKIRGQEIDISTPDAKVRVFVIPTNEELAIARETKEIVETEVKLRSSIPV</sequence>
<comment type="function">
    <text evidence="1 5">Catalyzes the formation of acetyl phosphate from acetate and ATP. Can also catalyze the reverse reaction. Can also phosphorylate propionate, but has very low activity toward butyrate.</text>
</comment>
<comment type="catalytic activity">
    <reaction evidence="1 3 4 5 6 7 8">
        <text>acetate + ATP = acetyl phosphate + ADP</text>
        <dbReference type="Rhea" id="RHEA:11352"/>
        <dbReference type="ChEBI" id="CHEBI:22191"/>
        <dbReference type="ChEBI" id="CHEBI:30089"/>
        <dbReference type="ChEBI" id="CHEBI:30616"/>
        <dbReference type="ChEBI" id="CHEBI:456216"/>
        <dbReference type="EC" id="2.7.2.1"/>
    </reaction>
</comment>
<comment type="cofactor">
    <cofactor evidence="1 3 4">
        <name>Mg(2+)</name>
        <dbReference type="ChEBI" id="CHEBI:18420"/>
    </cofactor>
    <cofactor evidence="1 3 4">
        <name>Mn(2+)</name>
        <dbReference type="ChEBI" id="CHEBI:29035"/>
    </cofactor>
    <text evidence="1 3 4">Mg(2+). Can also accept Mn(2+). The Mg(2+) is bound between two conserved protein residues and the ATP phosphate groups.</text>
</comment>
<comment type="activity regulation">
    <text evidence="4 8">Inhibited by diethylpyrocarbonate, hydroxylamine and phenylglyoxal.</text>
</comment>
<comment type="biophysicochemical properties">
    <kinetics>
        <KM evidence="4 5 6 7 8">71 uM for ATP</KM>
        <KM evidence="4 5 6 7 8">98 uM for ADP</KM>
        <KM evidence="4 5 6 7 8">1.5 mM for acetate</KM>
        <KM evidence="4 5 6 7 8">0.47 mM for acetyl phosphate</KM>
    </kinetics>
    <temperatureDependence>
        <text evidence="4 5 6 7 8">Optimum temperature is 65 degrees Celsius. Protected from thermal inactivation by ATP.</text>
    </temperatureDependence>
</comment>
<comment type="pathway">
    <text evidence="1">Metabolic intermediate biosynthesis; acetyl-CoA biosynthesis; acetyl-CoA from acetate: step 1/2.</text>
</comment>
<comment type="subunit">
    <text evidence="1 2 3 4 6 7">Homodimer.</text>
</comment>
<comment type="subcellular location">
    <subcellularLocation>
        <location evidence="1">Cytoplasm</location>
    </subcellularLocation>
</comment>
<comment type="similarity">
    <text evidence="1">Belongs to the acetokinase family.</text>
</comment>
<accession>P38502</accession>
<keyword id="KW-0002">3D-structure</keyword>
<keyword id="KW-0067">ATP-binding</keyword>
<keyword id="KW-0963">Cytoplasm</keyword>
<keyword id="KW-0903">Direct protein sequencing</keyword>
<keyword id="KW-0418">Kinase</keyword>
<keyword id="KW-0460">Magnesium</keyword>
<keyword id="KW-0479">Metal-binding</keyword>
<keyword id="KW-0547">Nucleotide-binding</keyword>
<keyword id="KW-0808">Transferase</keyword>
<name>ACKA_METTE</name>
<proteinExistence type="evidence at protein level"/>
<gene>
    <name evidence="1" type="primary">ackA</name>
    <name type="synonym">ack</name>
</gene>
<evidence type="ECO:0000255" key="1">
    <source>
        <dbReference type="HAMAP-Rule" id="MF_00020"/>
    </source>
</evidence>
<evidence type="ECO:0000269" key="2">
    <source>
    </source>
</evidence>
<evidence type="ECO:0000269" key="3">
    <source>
    </source>
</evidence>
<evidence type="ECO:0000269" key="4">
    <source>
    </source>
</evidence>
<evidence type="ECO:0000269" key="5">
    <source>
    </source>
</evidence>
<evidence type="ECO:0000269" key="6">
    <source>
    </source>
</evidence>
<evidence type="ECO:0000269" key="7">
    <source>
    </source>
</evidence>
<evidence type="ECO:0000269" key="8">
    <source>
    </source>
</evidence>
<evidence type="ECO:0000305" key="9"/>
<evidence type="ECO:0007829" key="10">
    <source>
        <dbReference type="PDB" id="1G99"/>
    </source>
</evidence>